<proteinExistence type="evidence at protein level"/>
<reference key="1">
    <citation type="journal article" date="2002" name="Nature">
        <title>The genome sequence of Schizosaccharomyces pombe.</title>
        <authorList>
            <person name="Wood V."/>
            <person name="Gwilliam R."/>
            <person name="Rajandream M.A."/>
            <person name="Lyne M.H."/>
            <person name="Lyne R."/>
            <person name="Stewart A."/>
            <person name="Sgouros J.G."/>
            <person name="Peat N."/>
            <person name="Hayles J."/>
            <person name="Baker S.G."/>
            <person name="Basham D."/>
            <person name="Bowman S."/>
            <person name="Brooks K."/>
            <person name="Brown D."/>
            <person name="Brown S."/>
            <person name="Chillingworth T."/>
            <person name="Churcher C.M."/>
            <person name="Collins M."/>
            <person name="Connor R."/>
            <person name="Cronin A."/>
            <person name="Davis P."/>
            <person name="Feltwell T."/>
            <person name="Fraser A."/>
            <person name="Gentles S."/>
            <person name="Goble A."/>
            <person name="Hamlin N."/>
            <person name="Harris D.E."/>
            <person name="Hidalgo J."/>
            <person name="Hodgson G."/>
            <person name="Holroyd S."/>
            <person name="Hornsby T."/>
            <person name="Howarth S."/>
            <person name="Huckle E.J."/>
            <person name="Hunt S."/>
            <person name="Jagels K."/>
            <person name="James K.D."/>
            <person name="Jones L."/>
            <person name="Jones M."/>
            <person name="Leather S."/>
            <person name="McDonald S."/>
            <person name="McLean J."/>
            <person name="Mooney P."/>
            <person name="Moule S."/>
            <person name="Mungall K.L."/>
            <person name="Murphy L.D."/>
            <person name="Niblett D."/>
            <person name="Odell C."/>
            <person name="Oliver K."/>
            <person name="O'Neil S."/>
            <person name="Pearson D."/>
            <person name="Quail M.A."/>
            <person name="Rabbinowitsch E."/>
            <person name="Rutherford K.M."/>
            <person name="Rutter S."/>
            <person name="Saunders D."/>
            <person name="Seeger K."/>
            <person name="Sharp S."/>
            <person name="Skelton J."/>
            <person name="Simmonds M.N."/>
            <person name="Squares R."/>
            <person name="Squares S."/>
            <person name="Stevens K."/>
            <person name="Taylor K."/>
            <person name="Taylor R.G."/>
            <person name="Tivey A."/>
            <person name="Walsh S.V."/>
            <person name="Warren T."/>
            <person name="Whitehead S."/>
            <person name="Woodward J.R."/>
            <person name="Volckaert G."/>
            <person name="Aert R."/>
            <person name="Robben J."/>
            <person name="Grymonprez B."/>
            <person name="Weltjens I."/>
            <person name="Vanstreels E."/>
            <person name="Rieger M."/>
            <person name="Schaefer M."/>
            <person name="Mueller-Auer S."/>
            <person name="Gabel C."/>
            <person name="Fuchs M."/>
            <person name="Duesterhoeft A."/>
            <person name="Fritzc C."/>
            <person name="Holzer E."/>
            <person name="Moestl D."/>
            <person name="Hilbert H."/>
            <person name="Borzym K."/>
            <person name="Langer I."/>
            <person name="Beck A."/>
            <person name="Lehrach H."/>
            <person name="Reinhardt R."/>
            <person name="Pohl T.M."/>
            <person name="Eger P."/>
            <person name="Zimmermann W."/>
            <person name="Wedler H."/>
            <person name="Wambutt R."/>
            <person name="Purnelle B."/>
            <person name="Goffeau A."/>
            <person name="Cadieu E."/>
            <person name="Dreano S."/>
            <person name="Gloux S."/>
            <person name="Lelaure V."/>
            <person name="Mottier S."/>
            <person name="Galibert F."/>
            <person name="Aves S.J."/>
            <person name="Xiang Z."/>
            <person name="Hunt C."/>
            <person name="Moore K."/>
            <person name="Hurst S.M."/>
            <person name="Lucas M."/>
            <person name="Rochet M."/>
            <person name="Gaillardin C."/>
            <person name="Tallada V.A."/>
            <person name="Garzon A."/>
            <person name="Thode G."/>
            <person name="Daga R.R."/>
            <person name="Cruzado L."/>
            <person name="Jimenez J."/>
            <person name="Sanchez M."/>
            <person name="del Rey F."/>
            <person name="Benito J."/>
            <person name="Dominguez A."/>
            <person name="Revuelta J.L."/>
            <person name="Moreno S."/>
            <person name="Armstrong J."/>
            <person name="Forsburg S.L."/>
            <person name="Cerutti L."/>
            <person name="Lowe T."/>
            <person name="McCombie W.R."/>
            <person name="Paulsen I."/>
            <person name="Potashkin J."/>
            <person name="Shpakovski G.V."/>
            <person name="Ussery D."/>
            <person name="Barrell B.G."/>
            <person name="Nurse P."/>
        </authorList>
    </citation>
    <scope>NUCLEOTIDE SEQUENCE [LARGE SCALE GENOMIC DNA]</scope>
    <source>
        <strain>972 / ATCC 24843</strain>
    </source>
</reference>
<reference key="2">
    <citation type="journal article" date="2006" name="Nat. Biotechnol.">
        <title>ORFeome cloning and global analysis of protein localization in the fission yeast Schizosaccharomyces pombe.</title>
        <authorList>
            <person name="Matsuyama A."/>
            <person name="Arai R."/>
            <person name="Yashiroda Y."/>
            <person name="Shirai A."/>
            <person name="Kamata A."/>
            <person name="Sekido S."/>
            <person name="Kobayashi Y."/>
            <person name="Hashimoto A."/>
            <person name="Hamamoto M."/>
            <person name="Hiraoka Y."/>
            <person name="Horinouchi S."/>
            <person name="Yoshida M."/>
        </authorList>
    </citation>
    <scope>SUBCELLULAR LOCATION [LARGE SCALE ANALYSIS]</scope>
</reference>
<reference key="3">
    <citation type="journal article" date="2008" name="J. Proteome Res.">
        <title>Phosphoproteome analysis of fission yeast.</title>
        <authorList>
            <person name="Wilson-Grady J.T."/>
            <person name="Villen J."/>
            <person name="Gygi S.P."/>
        </authorList>
    </citation>
    <scope>PHOSPHORYLATION [LARGE SCALE ANALYSIS] AT SER-63</scope>
    <scope>IDENTIFICATION BY MASS SPECTROMETRY</scope>
</reference>
<sequence length="154" mass="17634">MAEENHDEAVRVAELRKKRTFRTFAYRGVELEQLLDLSAEQLVDLFHARARRRMLRGLGPNASRFIRKLRKAKSEAPLNEKPATVKTHLRNMIILPEMVGSVVGIYNGKLFNQVEIRPEMIGHYLGEFSITYKPTKHGRPGIGATHSSRFIPLK</sequence>
<feature type="chain" id="PRO_0000130050" description="Small ribosomal subunit protein uS19B">
    <location>
        <begin position="1"/>
        <end position="154"/>
    </location>
</feature>
<feature type="modified residue" description="Phosphoserine" evidence="3">
    <location>
        <position position="63"/>
    </location>
</feature>
<evidence type="ECO:0000250" key="1">
    <source>
        <dbReference type="UniProtKB" id="Q01855"/>
    </source>
</evidence>
<evidence type="ECO:0000269" key="2">
    <source>
    </source>
</evidence>
<evidence type="ECO:0000269" key="3">
    <source>
    </source>
</evidence>
<evidence type="ECO:0000305" key="4"/>
<accession>Q9UTQ6</accession>
<keyword id="KW-0002">3D-structure</keyword>
<keyword id="KW-0963">Cytoplasm</keyword>
<keyword id="KW-0539">Nucleus</keyword>
<keyword id="KW-0597">Phosphoprotein</keyword>
<keyword id="KW-1185">Reference proteome</keyword>
<keyword id="KW-0687">Ribonucleoprotein</keyword>
<keyword id="KW-0689">Ribosomal protein</keyword>
<protein>
    <recommendedName>
        <fullName evidence="4">Small ribosomal subunit protein uS19B</fullName>
    </recommendedName>
    <alternativeName>
        <fullName>40S ribosomal protein S15-B</fullName>
    </alternativeName>
</protein>
<gene>
    <name type="primary">rps1502</name>
    <name type="synonym">rps15b</name>
    <name type="ORF">SPAC1071.07c</name>
</gene>
<name>RS15B_SCHPO</name>
<organism>
    <name type="scientific">Schizosaccharomyces pombe (strain 972 / ATCC 24843)</name>
    <name type="common">Fission yeast</name>
    <dbReference type="NCBI Taxonomy" id="284812"/>
    <lineage>
        <taxon>Eukaryota</taxon>
        <taxon>Fungi</taxon>
        <taxon>Dikarya</taxon>
        <taxon>Ascomycota</taxon>
        <taxon>Taphrinomycotina</taxon>
        <taxon>Schizosaccharomycetes</taxon>
        <taxon>Schizosaccharomycetales</taxon>
        <taxon>Schizosaccharomycetaceae</taxon>
        <taxon>Schizosaccharomyces</taxon>
    </lineage>
</organism>
<comment type="function">
    <text evidence="1">Component of the ribosome, a large ribonucleoprotein complex responsible for the synthesis of proteins in the cell. The small ribosomal subunit (SSU) binds messenger RNAs (mRNAs) and translates the encoded message by selecting cognate aminoacyl-transfer RNA (tRNA) molecules. The large subunit (LSU) contains the ribosomal catalytic site termed the peptidyl transferase center (PTC), which catalyzes the formation of peptide bonds, thereby polymerizing the amino acids delivered by tRNAs into a polypeptide chain. The nascent polypeptides leave the ribosome through a tunnel in the LSU and interact with protein factors that function in enzymatic processing, targeting, and the membrane insertion of nascent chains at the exit of the ribosomal tunnel. uS19 is involved in the nuclear export of the small ribosomal subunit precursor. Has a role in the late stage of the assembly of pre-40S particles within the nucleus and controls their export to the cytoplasm.</text>
</comment>
<comment type="subunit">
    <text evidence="1">Component of the small ribosomal subunit (SSU). Mature yeast ribosomes consist of a small (40S) and a large (60S) subunit. The 40S small subunit contains 1 molecule of ribosomal RNA (18S rRNA) and at least 33 different proteins. The large 60S subunit contains 3 rRNA molecules (25S, 5.8S and 5S rRNA) and at least 46 different proteins.</text>
</comment>
<comment type="subcellular location">
    <subcellularLocation>
        <location evidence="1">Cytoplasm</location>
    </subcellularLocation>
    <subcellularLocation>
        <location evidence="2">Nucleus</location>
    </subcellularLocation>
    <subcellularLocation>
        <location evidence="2">Nucleus</location>
        <location evidence="2">Nucleolus</location>
    </subcellularLocation>
</comment>
<comment type="miscellaneous">
    <text>There are 2 genes for uS19 in S.pombe.</text>
</comment>
<comment type="similarity">
    <text evidence="4">Belongs to the universal ribosomal protein uS19 family.</text>
</comment>
<dbReference type="EMBL" id="CU329670">
    <property type="protein sequence ID" value="CAB59883.1"/>
    <property type="molecule type" value="Genomic_DNA"/>
</dbReference>
<dbReference type="PIR" id="T37489">
    <property type="entry name" value="T37489"/>
</dbReference>
<dbReference type="RefSeq" id="NP_594357.1">
    <property type="nucleotide sequence ID" value="NM_001019778.2"/>
</dbReference>
<dbReference type="PDB" id="9AXT">
    <property type="method" value="EM"/>
    <property type="resolution" value="2.40 A"/>
    <property type="chains" value="AS=1-154"/>
</dbReference>
<dbReference type="PDB" id="9AXV">
    <property type="method" value="EM"/>
    <property type="resolution" value="2.40 A"/>
    <property type="chains" value="AS=1-154"/>
</dbReference>
<dbReference type="PDBsum" id="9AXT"/>
<dbReference type="PDBsum" id="9AXV"/>
<dbReference type="EMDB" id="EMD-43972"/>
<dbReference type="EMDB" id="EMD-43976"/>
<dbReference type="SMR" id="Q9UTQ6"/>
<dbReference type="BioGRID" id="279355">
    <property type="interactions" value="11"/>
</dbReference>
<dbReference type="FunCoup" id="Q9UTQ6">
    <property type="interactions" value="413"/>
</dbReference>
<dbReference type="STRING" id="284812.Q9UTQ6"/>
<dbReference type="iPTMnet" id="Q9UTQ6"/>
<dbReference type="PaxDb" id="4896-SPAC1071.07c.1"/>
<dbReference type="EnsemblFungi" id="SPAC1071.07c.1">
    <property type="protein sequence ID" value="SPAC1071.07c.1:pep"/>
    <property type="gene ID" value="SPAC1071.07c"/>
</dbReference>
<dbReference type="GeneID" id="2542912"/>
<dbReference type="KEGG" id="spo:2542912"/>
<dbReference type="PomBase" id="SPAC1071.07c">
    <property type="gene designation" value="rps1502"/>
</dbReference>
<dbReference type="VEuPathDB" id="FungiDB:SPAC1071.07c"/>
<dbReference type="eggNOG" id="KOG0898">
    <property type="taxonomic scope" value="Eukaryota"/>
</dbReference>
<dbReference type="HOGENOM" id="CLU_097347_1_0_1"/>
<dbReference type="InParanoid" id="Q9UTQ6"/>
<dbReference type="OMA" id="KTHCRDM"/>
<dbReference type="PhylomeDB" id="Q9UTQ6"/>
<dbReference type="PRO" id="PR:Q9UTQ6"/>
<dbReference type="Proteomes" id="UP000002485">
    <property type="component" value="Chromosome I"/>
</dbReference>
<dbReference type="GO" id="GO:0022627">
    <property type="term" value="C:cytosolic small ribosomal subunit"/>
    <property type="evidence" value="ECO:0000269"/>
    <property type="project" value="PomBase"/>
</dbReference>
<dbReference type="GO" id="GO:0005730">
    <property type="term" value="C:nucleolus"/>
    <property type="evidence" value="ECO:0007005"/>
    <property type="project" value="PomBase"/>
</dbReference>
<dbReference type="GO" id="GO:0005634">
    <property type="term" value="C:nucleus"/>
    <property type="evidence" value="ECO:0007005"/>
    <property type="project" value="PomBase"/>
</dbReference>
<dbReference type="GO" id="GO:0003723">
    <property type="term" value="F:RNA binding"/>
    <property type="evidence" value="ECO:0007669"/>
    <property type="project" value="InterPro"/>
</dbReference>
<dbReference type="GO" id="GO:0003735">
    <property type="term" value="F:structural constituent of ribosome"/>
    <property type="evidence" value="ECO:0000318"/>
    <property type="project" value="GO_Central"/>
</dbReference>
<dbReference type="GO" id="GO:0002181">
    <property type="term" value="P:cytoplasmic translation"/>
    <property type="evidence" value="ECO:0000266"/>
    <property type="project" value="PomBase"/>
</dbReference>
<dbReference type="GO" id="GO:0000028">
    <property type="term" value="P:ribosomal small subunit assembly"/>
    <property type="evidence" value="ECO:0000318"/>
    <property type="project" value="GO_Central"/>
</dbReference>
<dbReference type="FunFam" id="3.30.860.10:FF:000002">
    <property type="entry name" value="40S ribosomal protein S15"/>
    <property type="match status" value="1"/>
</dbReference>
<dbReference type="Gene3D" id="3.30.860.10">
    <property type="entry name" value="30s Ribosomal Protein S19, Chain A"/>
    <property type="match status" value="1"/>
</dbReference>
<dbReference type="HAMAP" id="MF_00531">
    <property type="entry name" value="Ribosomal_uS19"/>
    <property type="match status" value="1"/>
</dbReference>
<dbReference type="InterPro" id="IPR002222">
    <property type="entry name" value="Ribosomal_uS19"/>
</dbReference>
<dbReference type="InterPro" id="IPR020934">
    <property type="entry name" value="Ribosomal_uS19_CS"/>
</dbReference>
<dbReference type="InterPro" id="IPR005713">
    <property type="entry name" value="Ribosomal_uS19_euk/arc"/>
</dbReference>
<dbReference type="InterPro" id="IPR023575">
    <property type="entry name" value="Ribosomal_uS19_SF"/>
</dbReference>
<dbReference type="NCBIfam" id="NF003121">
    <property type="entry name" value="PRK04038.1"/>
    <property type="match status" value="1"/>
</dbReference>
<dbReference type="NCBIfam" id="TIGR01025">
    <property type="entry name" value="uS19_arch"/>
    <property type="match status" value="1"/>
</dbReference>
<dbReference type="PANTHER" id="PTHR11880">
    <property type="entry name" value="RIBOSOMAL PROTEIN S19P FAMILY MEMBER"/>
    <property type="match status" value="1"/>
</dbReference>
<dbReference type="PANTHER" id="PTHR11880:SF2">
    <property type="entry name" value="SMALL RIBOSOMAL SUBUNIT PROTEIN US19"/>
    <property type="match status" value="1"/>
</dbReference>
<dbReference type="Pfam" id="PF00203">
    <property type="entry name" value="Ribosomal_S19"/>
    <property type="match status" value="1"/>
</dbReference>
<dbReference type="PIRSF" id="PIRSF002144">
    <property type="entry name" value="Ribosomal_S19"/>
    <property type="match status" value="1"/>
</dbReference>
<dbReference type="PRINTS" id="PR00975">
    <property type="entry name" value="RIBOSOMALS19"/>
</dbReference>
<dbReference type="SUPFAM" id="SSF54570">
    <property type="entry name" value="Ribosomal protein S19"/>
    <property type="match status" value="1"/>
</dbReference>
<dbReference type="PROSITE" id="PS00323">
    <property type="entry name" value="RIBOSOMAL_S19"/>
    <property type="match status" value="1"/>
</dbReference>